<evidence type="ECO:0000250" key="1">
    <source>
        <dbReference type="UniProtKB" id="O90368"/>
    </source>
</evidence>
<evidence type="ECO:0000250" key="2">
    <source>
        <dbReference type="UniProtKB" id="P03317"/>
    </source>
</evidence>
<evidence type="ECO:0000250" key="3">
    <source>
        <dbReference type="UniProtKB" id="P08411"/>
    </source>
</evidence>
<evidence type="ECO:0000250" key="4">
    <source>
        <dbReference type="UniProtKB" id="P27282"/>
    </source>
</evidence>
<evidence type="ECO:0000250" key="5">
    <source>
        <dbReference type="UniProtKB" id="P36328"/>
    </source>
</evidence>
<evidence type="ECO:0000250" key="6">
    <source>
        <dbReference type="UniProtKB" id="Q8JUX6"/>
    </source>
</evidence>
<evidence type="ECO:0000255" key="7">
    <source>
        <dbReference type="PROSITE-ProRule" id="PRU00490"/>
    </source>
</evidence>
<evidence type="ECO:0000255" key="8">
    <source>
        <dbReference type="PROSITE-ProRule" id="PRU00539"/>
    </source>
</evidence>
<evidence type="ECO:0000255" key="9">
    <source>
        <dbReference type="PROSITE-ProRule" id="PRU00853"/>
    </source>
</evidence>
<evidence type="ECO:0000255" key="10">
    <source>
        <dbReference type="PROSITE-ProRule" id="PRU00990"/>
    </source>
</evidence>
<evidence type="ECO:0000255" key="11">
    <source>
        <dbReference type="PROSITE-ProRule" id="PRU01079"/>
    </source>
</evidence>
<evidence type="ECO:0000256" key="12">
    <source>
        <dbReference type="SAM" id="MobiDB-lite"/>
    </source>
</evidence>
<evidence type="ECO:0000269" key="13">
    <source>
    </source>
</evidence>
<evidence type="ECO:0000305" key="14"/>
<evidence type="ECO:0000305" key="15">
    <source>
    </source>
</evidence>
<evidence type="ECO:0007744" key="16">
    <source>
        <dbReference type="PDB" id="5IQ5"/>
    </source>
</evidence>
<evidence type="ECO:0007829" key="17">
    <source>
        <dbReference type="PDB" id="5IQ5"/>
    </source>
</evidence>
<protein>
    <recommendedName>
        <fullName>Polyprotein P1234</fullName>
        <shortName>P1234</shortName>
    </recommendedName>
    <alternativeName>
        <fullName>Non-structural polyprotein</fullName>
    </alternativeName>
    <component>
        <recommendedName>
            <fullName>Polyprotein P123'</fullName>
            <shortName>P123'</shortName>
        </recommendedName>
    </component>
    <component>
        <recommendedName>
            <fullName>Polyprotein P123</fullName>
            <shortName>P123</shortName>
        </recommendedName>
    </component>
    <component>
        <recommendedName>
            <fullName>mRNA-capping enzyme nsP1</fullName>
            <ecNumber evidence="4">2.1.1.-</ecNumber>
            <ecNumber evidence="2">2.7.7.-</ecNumber>
        </recommendedName>
        <alternativeName>
            <fullName>Non-structural protein 1</fullName>
        </alternativeName>
    </component>
    <component>
        <recommendedName>
            <fullName>Protease nsP2</fullName>
            <ecNumber evidence="13">3.4.22.-</ecNumber>
            <ecNumber evidence="13">3.6.1.15</ecNumber>
            <ecNumber evidence="3">3.6.1.74</ecNumber>
            <ecNumber evidence="6">3.6.4.13</ecNumber>
        </recommendedName>
        <alternativeName>
            <fullName>Non-structural protein 2</fullName>
            <shortName>nsP2</shortName>
        </alternativeName>
    </component>
    <component>
        <recommendedName>
            <fullName>Non-structural protein 3'</fullName>
            <shortName>nsP3'</shortName>
            <ecNumber evidence="14">3.1.3.84</ecNumber>
        </recommendedName>
    </component>
    <component>
        <recommendedName>
            <fullName>Non-structural protein 3</fullName>
            <shortName>nsP3</shortName>
            <ecNumber evidence="6">3.1.3.84</ecNumber>
        </recommendedName>
    </component>
    <component>
        <recommendedName>
            <fullName>RNA-directed RNA polymerase nsP4</fullName>
            <ecNumber evidence="2">2.7.7.19</ecNumber>
            <ecNumber evidence="8">2.7.7.48</ecNumber>
        </recommendedName>
        <alternativeName>
            <fullName>Non-structural protein 4</fullName>
            <shortName>nsP4</shortName>
        </alternativeName>
    </component>
</protein>
<sequence>MSKVFVDIEAESPFLKSLQRAFPAFEVEAQQVTPNDHANARAFSHLATKLIEQETEKDTLILDIGSAPARRMMSEHTYHCVCPMRSAEDPERLLYYARKLAKASGEVVDRNIAAKIDDLQSVMATPDNESRTFCLHTDQTCRTQAEVAVYQDVYAVHAPTSLYFQAMKGVRTAYWIGFDTTPFMFDTMAGAYPTYATNWADEQVLKARNIGLCSASLTEGHLGKLSIMRKKKMTPSDQIMFSVGSTLYIESRRLLKSWHLPSVFHLKGRQSYTCRCDTIVSCEGYVVKKITMSPGVFGKTSGYAVTHHAEGFLVCKTTDTIAGERVSFPICTYVPSTICDQMTGILATEVTPEDAQKLLVGLNQRIVVNGRTQRNTNTMKNYLLPVVSQAFSKWAKEYRLDQEDEKNMGMRERTLTCCCLWAFKTHKNHTMYKKPDTQTIVKVPSEFNSFVIPSLWSAGLSIGIRHRIRLLLQSRRVEPLVPSMDVGEARAAEREAAEAKEAEDTLAALPPLIPTAPVLDDIPEVDVEELEFRAGAGVVETPRNALKVTPQDRDTMVGSYLVLSPQTVLKSVKLQALHPLAESVKIITHKGRAGRYQVDAYDGRVLLPTGAAIPVPDFQALSESATMVYNEREFINRKLYHIAVHGAALNTDEEGYEKVRAESTDAEYVYDVDRKQCVKREEAEGLVMIGDLINPPFHEFAYEGLKRRPAAPYKTTVVGVFGVPGSGKSGIIKSLVTRGDLVASGKKENCQEIMLDVKRYRDLDMTAKTVDSVLLNGVKQTVDVLYVDEAFACHAGTLLALIATVRPRKKVVLCGDPKQCGFFNLMQLQVNFNHNICTEVDHKSISRRCTLPITAIVSTLHYEGRMRTTNPYNKPVIIDTTGQTKPNREDIVLTCFRGWVKQLQLDYRGHEVMTAAASQGLTRKGVYAVRMKVNENPLYAQSSEHVNVLLTRTEGRLVWKTLSGDPWIKTLSNIPKGNFTATLEDWQREHDTIMRAITQEAAPLDVFQNKAKVCWAKCLVPVLETAGIKLSATDWSAIILAFKEDRAYSPEVALNEICTKIYGVDLDSGLFSAPRVSLHYTTNHWDNSPGGRMYGFSVEAANRLEQQHPFYRGRWASGQVLVAERKTQPIDVTCNLIPFNRRLPHTLVTEYHPIKGERVEWLVNKIPGYHVLLVSEYNLILPRRKVTWIAPPTVTGADLTYDLDLGLPPNAGRYDLVFVNMHTPYRLHHYQQCVDHAMKLQMLGGDALYLLKPGGSLLLSTYAYADRTSEAVVTALARRFSSFRAVTVRCVTSNTEVFLLFTNFDNGRRTVTLHQTNGKLSSIYAGTVLQAAGCAPAYAVKRADIATAIEDAVVNAANHRGQVGDGVCRAVARKWPQAFRNAATPVGTAKTVKCDETYIIHAVGPNFNNTSEAEGDRDLAAAYRAVAAEINRLSISSVAIPLLSTGIFSAGKDRVHQSLSHLLAAMDTTEARVTIYCRDKTWEQKIKTVLQNRSATELVSDELQFEVNLTRVHPDSSLVGRPGYSTTDGTLYSYMEGTKFHQAALDMAEITTLWPRVQDANEHICLYALGETMDNIRARCPVEDSDSSTPPKTVPCLCRYAMTPERVTRLRMHHTKDFVVCSSFQLPKYRIPGVQRVKCEKVMLFDAAPPASVSPVQYLTNQSETTISLSSFSITSDSSSLSTFPDLESAEELDHDSQSVRPALNEPDDHQPTPTAELATHPVPPPRPNRARRLAAARVQVQVEVHQPPSNQPTKPIPAPRTSLRPVPAPRRYVPRPVVELPWPLETIDVEFGAPTEEESDITFGDFSASEWETISNSSXLGRAGAYIFSSDVGPGHLQQKSVRQHDLEVPIMDRVIEEKVYPPKLDEAKEKQLLLKLQMHATDANRSRYQSRKVENMKATIIDRLKQGSAYYVSAAADKAVTYHVRYAKPRYSVPVMQRLSSATIAVATCNEFLARNYPTVASYQITDEYDAYLDMVDGSESCLDRANFCPAKLRCYPKHHAYHMPQIRSAVPSPFQNTLQNVLAAATKRNCNVTQMRELPTLDSAVYNVECFRKYACNNEYWEEFAKKPIRITTENLTTYVTKLKGGKAAALFAKTHNLVPLQEVPMDRFIMDMKRDVKVTPGTKHTEERPKVQVIQAAEPLATAYLCGIHRELVRRLNAVLLPNIHTLFDMSAEDFDAIISEHFKPGDHVLETDIASFDKSQDDSLALTGLMILEDLGVDNQLLDLIEAAFGQITSCHLPTGTRFKFGAMMKSGMFLTLFINTVLNITIASRVLEARLTNSACAAFIGDDNVVHGVVSDKLMADRCATWVNMEVKIIDAVMCIKPPYFCGGFLVYDHVTRTACRIADPLKRLFKLGKPLPADDCQDEDRRRALYDEVKKWSRSGLGSEIEVALASRYRLEGSYNLLLAMSTFAHSMKNFSALRGPVIHLYGGPK</sequence>
<organismHost>
    <name type="scientific">Aedes aegypti</name>
    <name type="common">Yellowfever mosquito</name>
    <name type="synonym">Culex aegypti</name>
    <dbReference type="NCBI Taxonomy" id="7159"/>
</organismHost>
<organismHost>
    <name type="scientific">Haemagogus</name>
    <dbReference type="NCBI Taxonomy" id="7180"/>
</organismHost>
<organismHost>
    <name type="scientific">Homo sapiens</name>
    <name type="common">Human</name>
    <dbReference type="NCBI Taxonomy" id="9606"/>
</organismHost>
<comment type="function">
    <molecule>Polyprotein P1234</molecule>
    <text evidence="6">Inactive precursor of the viral replicase, which is activated by cleavages carried out by the viral protease nsP2.</text>
</comment>
<comment type="function">
    <molecule>Polyprotein P123</molecule>
    <text evidence="2">The early replication complex formed by the polyprotein P123 and nsP4 synthesizes minus-strand RNAs (By similarity). As soon P123 is cleaved into mature proteins, the plus-strand RNAs synthesis begins (By similarity).</text>
</comment>
<comment type="function">
    <molecule>Polyprotein P123'</molecule>
    <text evidence="14">The early replication complex formed by the polyprotein P123' and nsP4 synthesizes minus-strand RNAs (Probable). Polyprotein P123' is a short-lived polyprotein that accumulates during early stage of infection (Probable). As soon P123' is cleaved into mature proteins, the plus-strand RNAs synthesis begins (Probable).</text>
</comment>
<comment type="function">
    <molecule>mRNA-capping enzyme nsP1</molecule>
    <text evidence="2 3 6 14">Cytoplasmic capping enzyme that catalyzes two virus-specific reactions: methyltransferase and nsP1 guanylyltransferase (By similarity). mRNA-capping is necessary since all viral RNAs are synthesized in the cytoplasm, and host capping enzymes are restricted to the nucleus (Probable). The enzymatic reaction involves a covalent link between 7-methyl-GMP and nsP1, whereas eukaryotic capping enzymes form a covalent complex only with GMP (By similarity). nsP1 capping consists in the following reactions: GTP is first methylated into 7-methyl-GMP and then is covalently linked to nsP1 to form the m7GMp-nsP1 complex from which 7-methyl-GMP complex is transferred to the mRNA to create the cap structure (By similarity). NsP1 is needed for the initiation of the minus-strand RNAs synthesis (By similarity). Probably serves as a membrane anchor for the replication complex composed of nsP1-nsP4 (By similarity). Palmitoylated nsP1 is remodeling host cell cytoskeleton, and induces filopodium-like structure formation at the surface of the host cell (By similarity).</text>
</comment>
<comment type="function">
    <molecule>Protease nsP2</molecule>
    <text evidence="2 3 6 13 15">Multifunctional protein whose N-terminus is part of the RNA polymerase complex and displays NTPase, RNA triphosphatase and helicase activities (By similarity). NTPase and RNA triphosphatase are involved in viral RNA capping and helicase keeps a check on the dsRNA replication intermediates (By similarity). The C-terminus harbors a protease that specifically cleaves the polyproteins and releases the mature proteins (By similarity). Required for the shutoff of minus-strand RNAs synthesis (By similarity). Specifically inhibits the host IFN response by promoting the nuclear export of host STAT1 (By similarity). Induces host transcription shutoff by inducing rapid proteasome-dependent degradation of POLR2A, a catalytic subunit of the RNAPII complex (PubMed:34944018). The resulting inhibition of cellular protein synthesis serves to ensure maximal viral gene expression and to evade host immune response (Probable).</text>
</comment>
<comment type="function">
    <molecule>Non-structural protein 3'</molecule>
    <text evidence="2 14">Seems to be essential for minus-strand RNAs and subgenomic 26S mRNAs synthesis (By similarity). Displays mono-ADP-ribosylhydrolase activity (Probable). ADP-ribosylation is a post-translational modification that controls various processes of the host cell and the virus probably needs to revert it for optimal viral replication (Probable). Binds proteins of FXR family and sequesters them into the viral RNA replication complexes thereby inhibiting the formation of host stress granules on viral mRNAs (Probable). The nsp3'-FXR complexes bind viral RNAs and probably orchestrate the assembly of viral replication complexes, thanks to the ability of FXR family members to self-assemble and bind DNA (Probable).</text>
</comment>
<comment type="function">
    <molecule>Non-structural protein 3</molecule>
    <text evidence="2 6">Seems to be essential for minus-strand RNAs and subgenomic 26S mRNAs synthesis (By similarity). Displays mono-ADP-ribosylhydrolase activity (By similarity). ADP-ribosylation is a post-translantional modification that controls various processes of the host cell and the virus probably needs to revert it for optimal viral replication (By similarity). Binds proteins of G3BP family and sequesters them into the viral RNA replication complexes thereby inhibiting the formation of host stress granules on viral mRNAs (By similarity). The nsp3-G3BP complexes bind viral RNAs and probably orchestrate the assembly of viral replication complexes, thanks to the ability of G3BP family members to self-assemble and bind DNA (By similarity).</text>
</comment>
<comment type="function">
    <molecule>RNA-directed RNA polymerase nsP4</molecule>
    <text evidence="2">RNA dependent RNA polymerase (By similarity). Replicates genomic and antigenomic RNA by recognizing replications specific signals. The early replication complex formed by the polyprotein P123 and nsP4 synthesizes minus-strand RNAs (By similarity). The late replication complex composed of fully processed nsP1-nsP4 is responsible for the production of genomic and subgenomic plus-strand RNAs (By similarity). The core catalytic domain of nsP4 also possesses terminal adenylyltransferase (TATase) activity that is probably involved in maintenance and repair of the poly(A) tail, an element required for replication of the viral genome (By similarity).</text>
</comment>
<comment type="catalytic activity">
    <reaction evidence="4">
        <text>GTP + S-adenosyl-L-methionine = N(7)-methyl-GTP + S-adenosyl-L-homocysteine</text>
        <dbReference type="Rhea" id="RHEA:46948"/>
        <dbReference type="ChEBI" id="CHEBI:37565"/>
        <dbReference type="ChEBI" id="CHEBI:57856"/>
        <dbReference type="ChEBI" id="CHEBI:59789"/>
        <dbReference type="ChEBI" id="CHEBI:87133"/>
    </reaction>
</comment>
<comment type="catalytic activity">
    <reaction evidence="2">
        <text>N(7)-methyl-GTP + L-histidyl-[protein] = N(tele)-(N(7)-methylguanosine 5'-phospho)-L-histidyl-[protein] + diphosphate</text>
        <dbReference type="Rhea" id="RHEA:54792"/>
        <dbReference type="Rhea" id="RHEA-COMP:9745"/>
        <dbReference type="Rhea" id="RHEA-COMP:13995"/>
        <dbReference type="ChEBI" id="CHEBI:29979"/>
        <dbReference type="ChEBI" id="CHEBI:33019"/>
        <dbReference type="ChEBI" id="CHEBI:87133"/>
        <dbReference type="ChEBI" id="CHEBI:138334"/>
    </reaction>
    <physiologicalReaction direction="left-to-right" evidence="2">
        <dbReference type="Rhea" id="RHEA:54793"/>
    </physiologicalReaction>
</comment>
<comment type="catalytic activity">
    <reaction evidence="4">
        <text>N(tele)-(N(7)-methylguanosine 5'-phospho)-L-histidyl-[protein] + a 5'-end diphospho-(purine-ribonucleoside) in mRNA + H(+) = a 5'-end (N(7)-methyl 5'-triphosphoguanosine)-(purine-ribonucleoside) in mRNA + L-histidyl-[protein]</text>
        <dbReference type="Rhea" id="RHEA:54800"/>
        <dbReference type="Rhea" id="RHEA-COMP:9745"/>
        <dbReference type="Rhea" id="RHEA-COMP:12925"/>
        <dbReference type="Rhea" id="RHEA-COMP:13929"/>
        <dbReference type="Rhea" id="RHEA-COMP:13995"/>
        <dbReference type="ChEBI" id="CHEBI:15378"/>
        <dbReference type="ChEBI" id="CHEBI:29979"/>
        <dbReference type="ChEBI" id="CHEBI:133968"/>
        <dbReference type="ChEBI" id="CHEBI:138276"/>
        <dbReference type="ChEBI" id="CHEBI:138334"/>
    </reaction>
</comment>
<comment type="catalytic activity">
    <reaction evidence="3">
        <text>a 5'-end triphospho-ribonucleoside in mRNA + H2O = a 5'-end diphospho-ribonucleoside in mRNA + phosphate + H(+)</text>
        <dbReference type="Rhea" id="RHEA:67004"/>
        <dbReference type="Rhea" id="RHEA-COMP:17164"/>
        <dbReference type="Rhea" id="RHEA-COMP:17165"/>
        <dbReference type="ChEBI" id="CHEBI:15377"/>
        <dbReference type="ChEBI" id="CHEBI:15378"/>
        <dbReference type="ChEBI" id="CHEBI:43474"/>
        <dbReference type="ChEBI" id="CHEBI:167616"/>
        <dbReference type="ChEBI" id="CHEBI:167618"/>
        <dbReference type="EC" id="3.6.1.74"/>
    </reaction>
    <physiologicalReaction direction="left-to-right" evidence="3">
        <dbReference type="Rhea" id="RHEA:67005"/>
    </physiologicalReaction>
</comment>
<comment type="catalytic activity">
    <reaction evidence="6">
        <text>a ribonucleoside 5'-triphosphate + H2O = a ribonucleoside 5'-diphosphate + phosphate + H(+)</text>
        <dbReference type="Rhea" id="RHEA:23680"/>
        <dbReference type="ChEBI" id="CHEBI:15377"/>
        <dbReference type="ChEBI" id="CHEBI:15378"/>
        <dbReference type="ChEBI" id="CHEBI:43474"/>
        <dbReference type="ChEBI" id="CHEBI:57930"/>
        <dbReference type="ChEBI" id="CHEBI:61557"/>
        <dbReference type="EC" id="3.6.1.15"/>
    </reaction>
</comment>
<comment type="catalytic activity">
    <reaction evidence="13">
        <text>ATP + H2O = ADP + phosphate + H(+)</text>
        <dbReference type="Rhea" id="RHEA:13065"/>
        <dbReference type="ChEBI" id="CHEBI:15377"/>
        <dbReference type="ChEBI" id="CHEBI:15378"/>
        <dbReference type="ChEBI" id="CHEBI:30616"/>
        <dbReference type="ChEBI" id="CHEBI:43474"/>
        <dbReference type="ChEBI" id="CHEBI:456216"/>
        <dbReference type="EC" id="3.6.4.13"/>
    </reaction>
</comment>
<comment type="catalytic activity">
    <reaction evidence="8">
        <text>RNA(n) + a ribonucleoside 5'-triphosphate = RNA(n+1) + diphosphate</text>
        <dbReference type="Rhea" id="RHEA:21248"/>
        <dbReference type="Rhea" id="RHEA-COMP:14527"/>
        <dbReference type="Rhea" id="RHEA-COMP:17342"/>
        <dbReference type="ChEBI" id="CHEBI:33019"/>
        <dbReference type="ChEBI" id="CHEBI:61557"/>
        <dbReference type="ChEBI" id="CHEBI:140395"/>
        <dbReference type="EC" id="2.7.7.48"/>
    </reaction>
</comment>
<comment type="catalytic activity">
    <reaction evidence="2">
        <text>RNA(n) + ATP = RNA(n)-3'-adenine ribonucleotide + diphosphate</text>
        <dbReference type="Rhea" id="RHEA:11332"/>
        <dbReference type="Rhea" id="RHEA-COMP:14527"/>
        <dbReference type="Rhea" id="RHEA-COMP:17347"/>
        <dbReference type="ChEBI" id="CHEBI:30616"/>
        <dbReference type="ChEBI" id="CHEBI:33019"/>
        <dbReference type="ChEBI" id="CHEBI:140395"/>
        <dbReference type="ChEBI" id="CHEBI:173115"/>
        <dbReference type="EC" id="2.7.7.19"/>
    </reaction>
</comment>
<comment type="catalytic activity">
    <reaction evidence="2">
        <text>4-O-(ADP-D-ribosyl)-L-aspartyl-[protein] + H2O = L-aspartyl-[protein] + ADP-D-ribose + H(+)</text>
        <dbReference type="Rhea" id="RHEA:54428"/>
        <dbReference type="Rhea" id="RHEA-COMP:9867"/>
        <dbReference type="Rhea" id="RHEA-COMP:13832"/>
        <dbReference type="ChEBI" id="CHEBI:15377"/>
        <dbReference type="ChEBI" id="CHEBI:15378"/>
        <dbReference type="ChEBI" id="CHEBI:29961"/>
        <dbReference type="ChEBI" id="CHEBI:57967"/>
        <dbReference type="ChEBI" id="CHEBI:138102"/>
    </reaction>
    <physiologicalReaction direction="left-to-right" evidence="2">
        <dbReference type="Rhea" id="RHEA:54429"/>
    </physiologicalReaction>
</comment>
<comment type="catalytic activity">
    <reaction evidence="2">
        <text>5-O-(ADP-D-ribosyl)-L-glutamyl-[protein] + H2O = L-glutamyl-[protein] + ADP-D-ribose + H(+)</text>
        <dbReference type="Rhea" id="RHEA:58248"/>
        <dbReference type="Rhea" id="RHEA-COMP:10208"/>
        <dbReference type="Rhea" id="RHEA-COMP:15089"/>
        <dbReference type="ChEBI" id="CHEBI:15377"/>
        <dbReference type="ChEBI" id="CHEBI:15378"/>
        <dbReference type="ChEBI" id="CHEBI:29973"/>
        <dbReference type="ChEBI" id="CHEBI:57967"/>
        <dbReference type="ChEBI" id="CHEBI:142540"/>
    </reaction>
    <physiologicalReaction direction="left-to-right" evidence="2">
        <dbReference type="Rhea" id="RHEA:58249"/>
    </physiologicalReaction>
</comment>
<comment type="catalytic activity">
    <reaction evidence="6">
        <text>ADP-alpha-D-ribose 1''-phosphate + H2O = ADP-D-ribose + phosphate</text>
        <dbReference type="Rhea" id="RHEA:25029"/>
        <dbReference type="ChEBI" id="CHEBI:15377"/>
        <dbReference type="ChEBI" id="CHEBI:43474"/>
        <dbReference type="ChEBI" id="CHEBI:57967"/>
        <dbReference type="ChEBI" id="CHEBI:58753"/>
        <dbReference type="EC" id="3.1.3.84"/>
    </reaction>
    <physiologicalReaction direction="left-to-right" evidence="6">
        <dbReference type="Rhea" id="RHEA:25030"/>
    </physiologicalReaction>
</comment>
<comment type="cofactor">
    <cofactor evidence="2">
        <name>Mg(2+)</name>
        <dbReference type="ChEBI" id="CHEBI:18420"/>
    </cofactor>
    <cofactor evidence="2">
        <name>Mn(2+)</name>
        <dbReference type="ChEBI" id="CHEBI:29035"/>
    </cofactor>
    <text evidence="2">For nsP4 adenylyltransferase activity; Mn(2+) supports catalysis at 60% of the levels observed with Mg(2+).</text>
</comment>
<comment type="cofactor">
    <cofactor evidence="2">
        <name>Mg(2+)</name>
        <dbReference type="ChEBI" id="CHEBI:18420"/>
    </cofactor>
    <text evidence="2">For nsP4 RNA-directed RNA polymerase activity.</text>
</comment>
<comment type="cofactor">
    <cofactor evidence="4">
        <name>Mg(2+)</name>
        <dbReference type="ChEBI" id="CHEBI:18420"/>
    </cofactor>
    <text evidence="4">For nsP1 guanylylation.</text>
</comment>
<comment type="cofactor">
    <cofactor>
        <name>Mg(2+)</name>
        <dbReference type="ChEBI" id="CHEBI:18420"/>
    </cofactor>
    <text evidence="6">For nsP2 RNA triphosphatase activity.</text>
</comment>
<comment type="cofactor">
    <cofactor>
        <name>Mg(2+)</name>
        <dbReference type="ChEBI" id="CHEBI:18420"/>
    </cofactor>
    <text evidence="6">For nsP2 NTPase activity.</text>
</comment>
<comment type="subunit">
    <molecule>mRNA-capping enzyme nsP1</molecule>
    <text evidence="2 4">Interacts with non-structural protein 3 (By similarity). Interacts with RNA-directed RNA polymerase nsP4 (By similarity). Interacts with protease nsP2 (By similarity). interacts with itself (By similarity).</text>
</comment>
<comment type="subunit">
    <molecule>Non-structural protein 3</molecule>
    <text evidence="2 4">Interacts with mRNA-capping enzyme nsP1 (By similarity). Interacts with host DDX1 (By similarity). Interacts with host DDX3 (By similarity). Interacts (via C-terminus) with host G3BP1; this interaction inhibits the formation of host stress granules on viral mRNAs and the nsp3-G3BP1 complexes bind viral RNAs and probably orchestrate the assembly of viral replication complexes (By similarity). Interacts (via C-terminus) with host G3BP2; this interaction inhibits the formation of host stress granules on viral mRNAs and the nsp3-G3BP2 complexes bind viral RNAs and probably orchestrate the assembly of viral replication complexes (By similarity).</text>
</comment>
<comment type="subunit">
    <molecule>RNA-directed RNA polymerase nsP4</molecule>
    <text evidence="2 4">Interacts with mRNA-capping enzyme nsP1 (By similarity). Interacts with protease nsP2 (By similarity). interacts with itself (By similarity).</text>
</comment>
<comment type="subunit">
    <molecule>Protease nsP2</molecule>
    <text evidence="2 4 13">Interacts with RNA-directed RNA polymerase nsP4 (By similarity). Interacts with mRNA-capping enzyme nsP1 (By similarity). Interacts with KPNA1/karyopherin-alpha1; this interaction probably allows the active transport of protease nsP2 into the host nucleus (By similarity). Interacts with host POLR2A/RPB1; this interaction seems to induce the depletion of host POLR2A and may play a role in the transcriptional shutoff induced by protease nsP2 (PubMed:34944018). Interacts with host GTF2E2/TF2E2; this interaction seems to induce the depletion of host GTF2E2/TF2E2 and may play a role in the transcriptional shutoff induced by protease nsP2 (PubMed:34944018).</text>
</comment>
<comment type="subcellular location">
    <molecule>Polyprotein P1234</molecule>
    <subcellularLocation>
        <location evidence="14">Host cytoplasmic vesicle membrane</location>
        <topology evidence="14">Peripheral membrane protein</topology>
    </subcellularLocation>
    <text evidence="14">Part of cytoplasmic vesicles, which are probably formed at the plasma membrane and internalized leading to late endosomal/lysosomal spherules containing the replication complex.</text>
</comment>
<comment type="subcellular location">
    <molecule>Polyprotein P123'</molecule>
    <subcellularLocation>
        <location evidence="14">Host cytoplasmic vesicle membrane</location>
        <topology evidence="14">Peripheral membrane protein</topology>
    </subcellularLocation>
    <text evidence="14">Part of cytoplasmic vesicles, which are probably formed at the plasma membrane and internalized leading to late endosomal/lysosomal spherules containing the replication complex.</text>
</comment>
<comment type="subcellular location">
    <molecule>Polyprotein P123</molecule>
    <subcellularLocation>
        <location evidence="14">Host cytoplasmic vesicle membrane</location>
        <topology evidence="14">Peripheral membrane protein</topology>
    </subcellularLocation>
    <text evidence="14">Part of cytoplasmic vesicles, which are probably formed at the plasma membrane and internalized leading to late endosomal/lysosomal spherules containing the replication complex.</text>
</comment>
<comment type="subcellular location">
    <molecule>mRNA-capping enzyme nsP1</molecule>
    <subcellularLocation>
        <location evidence="3">Host cytoplasmic vesicle membrane</location>
        <topology evidence="3">Lipid-anchor</topology>
    </subcellularLocation>
    <subcellularLocation>
        <location evidence="3">Host cell membrane</location>
        <topology evidence="3">Lipid-anchor</topology>
        <orientation evidence="3">Cytoplasmic side</orientation>
    </subcellularLocation>
    <subcellularLocation>
        <location evidence="3">Host cell projection</location>
        <location evidence="3">Host filopodium</location>
    </subcellularLocation>
    <text evidence="3">In the late phase of infection, the polyprotein is quickly cleaved before localization to cellular membranes. Then a fraction of nsP1 localizes to the inner surface of the plasma membrane and its filopodial extensions. Only the palmitoylated nsP1 localizes to the host filopodia (By similarity). NsP1 is also part of cytoplasmic vesicles, which are probably formed at the plasma membrane and internalized leading to late endosomal/lysosomal spherules containing the replication complex (By similarity).</text>
</comment>
<comment type="subcellular location">
    <molecule>Protease nsP2</molecule>
    <subcellularLocation>
        <location evidence="3">Host cytoplasmic vesicle membrane</location>
        <topology evidence="3">Peripheral membrane protein</topology>
    </subcellularLocation>
    <subcellularLocation>
        <location evidence="4">Host nucleus</location>
    </subcellularLocation>
    <subcellularLocation>
        <location evidence="4">Host cytoplasm</location>
    </subcellularLocation>
    <text evidence="3 4">In the late phase of infection, the polyprotein is quickly cleaved before localization to cellular membranes. Then approximately half of nsP2 is found in the nucleus (By similarity). Shuttles between cytoplasm and nucleus (By similarity). NsP2 is also part of cytoplasmic vesicles, which are probably formed at the plasma membrane and internalized leading to late endosomal/lysosomal spherules containing the replication complex (By similarity).</text>
</comment>
<comment type="subcellular location">
    <molecule>Non-structural protein 3</molecule>
    <subcellularLocation>
        <location evidence="2">Host cytoplasmic vesicle membrane</location>
        <topology evidence="14">Peripheral membrane protein</topology>
    </subcellularLocation>
    <text evidence="2">In the late phase of infection, the polyprotein is quickly cleaved before localization to cellular membranes. Then nsP3 and nsP3' form aggregates in cytoplasm (By similarity). NsP3 is also part of cytoplasmic vesicles, which are probably formed at the plasma membrane and internalized leading to late endosomal/lysosomal spherules containing the replication complex (By similarity).</text>
</comment>
<comment type="subcellular location">
    <molecule>Non-structural protein 3'</molecule>
    <subcellularLocation>
        <location evidence="2">Host cytoplasmic vesicle membrane</location>
        <topology evidence="14">Peripheral membrane protein</topology>
    </subcellularLocation>
    <text evidence="2">In the late phase of infection, the polyprotein is quickly cleaved before localization to cellular membranes. Then nsP3 and nsP3' form aggregates in cytoplasm (By similarity). NsP3' is also part of cytoplasmic vesicles, which are probably formed at the plasma membrane and internalized leading to late endosomal/lysosomal spherules containing the replication complex (By similarity).</text>
</comment>
<comment type="subcellular location">
    <molecule>RNA-directed RNA polymerase nsP4</molecule>
    <subcellularLocation>
        <location>Host cytoplasmic vesicle membrane</location>
        <topology evidence="2">Peripheral membrane protein</topology>
    </subcellularLocation>
    <text evidence="3">NsP4 is part of cytoplasmic vesicles, which are probably formed at the plasma membrane and internalized leading to late endosomal/lysosomal spherules containing the replication complex.</text>
</comment>
<comment type="domain">
    <molecule>Protease nsP2</molecule>
    <text evidence="4 6 13">The N-terminus exhibits NTPase and RNA triphosphatase activities and is proposed to have helicase activity, whereas the C-terminus possesses protease activity (PubMed:34944018). Contains a nuclear localization signal and a nuclear export signal, these two motifs are probably involved in the shuttling between the cytoplasm and the nucleus of nsP2 (By similarity). The C-terminus is required for promoting the export of host STAT1 (By similarity).</text>
</comment>
<comment type="domain">
    <molecule>Non-structural protein 3</molecule>
    <text evidence="2 3">In the N-terminus, the macro domain displays a mono-ADP-ribosylhydrolase activity (By similarity). The central part has a zinc-binding function (By similarity). The C-terminus contains two FGDF motifs necessary and sufficient for formation of the nsP3/G3BP1 complex (By similarity).</text>
</comment>
<comment type="domain">
    <molecule>Non-structural protein 3'</molecule>
    <text evidence="2 3">In the N-terminus, the macro domain displays a mono-ADP-ribosylhydrolase activity (By similarity). The central part has a zinc-binding function (By similarity). The C-terminus contains two FGDF motifs necessary and sufficient for formation of the nsP3'/G3BP1 complex (By similarity).</text>
</comment>
<comment type="PTM">
    <molecule>Polyprotein P1234</molecule>
    <text evidence="2">Specific enzymatic cleavages in vivo yield mature proteins (By similarity). The processing of the polyprotein is temporally regulated (By similarity). In early stages (1.7 hpi), P1234 is first cleaved in trans through its nsP2 protease activity, releasing P123' and nsP4, which associate to form the early replication complex (By similarity). At the same time, P1234 is also cut at the nsP1/nsP2 site early in infection but with lower efficiency (By similarity). After replication of the viral minus-strand RNAs (4 hpi), the polyproteins are cut at the nsP1/nsP2 and nsP2/nsP3 sites very efficiently, preventing accumulation of P123' and P1234 and allowing the formation of the late replication complex (By similarity). NsP3'/nsP4 site is not cleaved anymore and P34 is produced rather than nsP4 (By similarity).</text>
</comment>
<comment type="PTM">
    <molecule>Polyprotein P123</molecule>
    <text evidence="2">Specific enzymatic cleavages in vivo yield mature proteins (By similarity). The processing of the polyprotein is temporally regulated (By similarity). In early stages (1.7 hpi), P123 is cleaved at the nsP1/nsP2 site with low efficiency (By similarity). After replication of the viral minus-strand RNAs (4 hpi), the polyproteins are cut at the nsP1/nsP2 and nsP2/nsP3 sites very efficiently, preventing accumulation of P123 and allowing the formation of the late replication complex (By similarity).</text>
</comment>
<comment type="PTM">
    <molecule>Polyprotein P123'</molecule>
    <text evidence="2">Specific enzymatic cleavages in vivo yield mature proteins (By similarity). The processing of the polyprotein is temporally regulated (By similarity). In early stages (1.7 hpi), P123' is cleaved at the nsP1/nsP2 site with low efficiency (By similarity). After replication of the viral minus-strand RNAs (4 hpi), the polyproteins are cut at the nsP1/nsP2 and nsP2/nsP3 sites very efficiently, preventing accumulation of P123' and allowing the formation of the late replication complex (By similarity).</text>
</comment>
<comment type="PTM">
    <molecule>mRNA-capping enzyme nsP1</molecule>
    <text evidence="6">Palmitoylated by host palmitoyltransferases ZDHHC2 and ZDHHC19.</text>
</comment>
<comment type="PTM">
    <molecule>Non-structural protein 3</molecule>
    <text evidence="3">Phosphorylated by host on serines and threonines.</text>
</comment>
<comment type="PTM">
    <molecule>Non-structural protein 3'</molecule>
    <text evidence="3">Phosphorylated by host on serines and threonines.</text>
</comment>
<comment type="PTM">
    <molecule>RNA-directed RNA polymerase nsP4</molecule>
    <text evidence="2">Ubiquitinated; targets the protein for rapid degradation via the ubiquitin system (By similarity). Nsp4 is present in extremely low quantities due to low frequency of translation through the amber stop-codon and the degradation by the ubiquitin pathway (By similarity).</text>
</comment>
<comment type="miscellaneous">
    <text evidence="2">Viral replication produces dsRNA in the late phase of infection, resulting in a strong activation of host EIF2AK2/PKR, leading to almost complete phosphorylation of EIF2A (By similarity). This inactivates completely cellular translation initiation, resulting shutoff of host proteins synthesis (By similarity). However, phosphorylation of EIF2A is probably not the only mechanism responsible for the host translation shutoff (By similarity). The viral translation can still occur normally because it relies on a hairpin structure in the coding region of sgRNA and is EIF2A-, EIF2D-, EIF4G- EIF4A-independent (By similarity).</text>
</comment>
<comment type="miscellaneous">
    <text evidence="1 2 14">The genome codes for P123, but readthrough of a terminator codon UGA occurs between the codons for Ser-1819 and Leu-1821 giving rise to P1234 (Probable). P1234 is cleaved quickly by nsP2 into P123' and nsP4 (By similarity). Further processing of p123' gives nsP1, nsP2 and nsP3' which is 6 amino acids longer than nsP3 since the cleavage site is after the readthrough (By similarity). This unusual molecular mechanism ensures that few nsP4 are produced compared to other non-structural proteins (By similarity). Mutant viruses with no alternative termination site grow significantly slower than wild-type virus (By similarity). The opal termination codon is frequently mutated to a sense codon on passage in cell culture (By similarity). The presence of the opal codon may be a requirement for viral maintenance in both vertebrate and invertebrate hosts and a selective advantage may be conferred in cell culture for the sense codon (By similarity).</text>
</comment>
<accession>Q8QZ73</accession>
<accession>Q8QHM4</accession>
<organism>
    <name type="scientific">Mayaro virus (strain Brazil)</name>
    <name type="common">MAYV</name>
    <dbReference type="NCBI Taxonomy" id="374990"/>
    <lineage>
        <taxon>Viruses</taxon>
        <taxon>Riboviria</taxon>
        <taxon>Orthornavirae</taxon>
        <taxon>Kitrinoviricota</taxon>
        <taxon>Alsuviricetes</taxon>
        <taxon>Martellivirales</taxon>
        <taxon>Togaviridae</taxon>
        <taxon>Alphavirus</taxon>
        <taxon>Mayaro virus</taxon>
    </lineage>
</organism>
<keyword id="KW-0002">3D-structure</keyword>
<keyword id="KW-0067">ATP-binding</keyword>
<keyword id="KW-1262">Eukaryotic host gene expression shutoff by virus</keyword>
<keyword id="KW-1191">Eukaryotic host transcription shutoff by virus</keyword>
<keyword id="KW-0342">GTP-binding</keyword>
<keyword id="KW-0347">Helicase</keyword>
<keyword id="KW-1032">Host cell membrane</keyword>
<keyword id="KW-1034">Host cell projection</keyword>
<keyword id="KW-1035">Host cytoplasm</keyword>
<keyword id="KW-1036">Host cytoplasmic vesicle</keyword>
<keyword id="KW-1190">Host gene expression shutoff by virus</keyword>
<keyword id="KW-1043">Host membrane</keyword>
<keyword id="KW-1048">Host nucleus</keyword>
<keyword id="KW-0945">Host-virus interaction</keyword>
<keyword id="KW-0378">Hydrolase</keyword>
<keyword id="KW-1104">Inhibition of host RNA polymerase II by virus</keyword>
<keyword id="KW-0449">Lipoprotein</keyword>
<keyword id="KW-0472">Membrane</keyword>
<keyword id="KW-0479">Metal-binding</keyword>
<keyword id="KW-0489">Methyltransferase</keyword>
<keyword id="KW-0506">mRNA capping</keyword>
<keyword id="KW-0507">mRNA processing</keyword>
<keyword id="KW-0511">Multifunctional enzyme</keyword>
<keyword id="KW-0547">Nucleotide-binding</keyword>
<keyword id="KW-0548">Nucleotidyltransferase</keyword>
<keyword id="KW-0564">Palmitate</keyword>
<keyword id="KW-0645">Protease</keyword>
<keyword id="KW-1159">RNA suppression of termination</keyword>
<keyword id="KW-0694">RNA-binding</keyword>
<keyword id="KW-0696">RNA-directed RNA polymerase</keyword>
<keyword id="KW-0949">S-adenosyl-L-methionine</keyword>
<keyword id="KW-0788">Thiol protease</keyword>
<keyword id="KW-0808">Transferase</keyword>
<keyword id="KW-0832">Ubl conjugation</keyword>
<keyword id="KW-0693">Viral RNA replication</keyword>
<keyword id="KW-0862">Zinc</keyword>
<proteinExistence type="evidence at protein level"/>
<reference key="1">
    <citation type="submission" date="2000-02" db="EMBL/GenBank/DDBJ databases">
        <authorList>
            <person name="Netto M.C.M.G."/>
            <person name="Shirako Y."/>
            <person name="Strauss E.G."/>
            <person name="Carvalho M.G.C."/>
            <person name="Strauss J.H."/>
        </authorList>
    </citation>
    <scope>NUCLEOTIDE SEQUENCE [GENOMIC RNA]</scope>
</reference>
<reference evidence="16" key="2">
    <citation type="journal article" date="2015" name="Biomol. NMR. Assign.">
        <title>NMR study of non-structural proteins--part I: (1)H, (13)C, (15)N backbone and side-chain resonance assignment of macro domain from Mayaro virus (MAYV).</title>
        <authorList>
            <person name="Melekis E."/>
            <person name="Tsika A.C."/>
            <person name="Lichiere J."/>
            <person name="Chasapis C.T."/>
            <person name="Margiolaki I."/>
            <person name="Papageorgiou N."/>
            <person name="Coutard B."/>
            <person name="Bentrop D."/>
            <person name="Spyroulias G.A."/>
        </authorList>
    </citation>
    <scope>STRUCTURE BY NMR OF 1335-1493</scope>
</reference>
<reference key="3">
    <citation type="journal article" date="2021" name="Cells">
        <title>Mayaro Virus Non-Structural Protein 2 Circumvents the Induction of Interferon in Part by Depleting Host Transcription Initiation Factor IIE Subunit 2.</title>
        <authorList>
            <person name="Ishida R."/>
            <person name="Cole J."/>
            <person name="Lopez-Orozco J."/>
            <person name="Fayad N."/>
            <person name="Felix-Lopez A."/>
            <person name="Elaish M."/>
            <person name="Luo S.Y."/>
            <person name="Julien O."/>
            <person name="Kumar A."/>
            <person name="Hobman T.C."/>
        </authorList>
    </citation>
    <scope>FUNCTION (PROTEASE NSP2)</scope>
    <scope>MUTAGENESIS OF LYS-733; CYS-1014; 1184-ARG-LYS-1185 AND PRO-1253</scope>
    <scope>CATALYTIC ACTIVITY (PROTEASE NSP2)</scope>
    <scope>INTERACTION WITH HOST POLR2A/RPB1 (PROTEASE NSP2)</scope>
    <scope>INTERACTION WITH HOST GTF2E2/TF2E2 (PROTEASE NSP2)</scope>
</reference>
<name>POLN_MAYAB</name>
<feature type="chain" id="PRO_0000308393" description="Polyprotein P1234">
    <location>
        <begin position="1"/>
        <end position="2437"/>
    </location>
</feature>
<feature type="chain" id="PRO_0000229927" description="Polyprotein P123'">
    <location>
        <begin position="1"/>
        <end position="1826"/>
    </location>
</feature>
<feature type="chain" id="PRO_0000229926" description="Polyprotein P123">
    <location>
        <begin position="1"/>
        <end position="1819"/>
    </location>
</feature>
<feature type="chain" id="PRO_0000229928" description="mRNA-capping enzyme nsP1">
    <location>
        <begin position="1"/>
        <end position="536"/>
    </location>
</feature>
<feature type="chain" id="PRO_0000229929" description="Protease nsP2">
    <location>
        <begin position="537"/>
        <end position="1334"/>
    </location>
</feature>
<feature type="chain" id="PRO_0000229931" description="Non-structural protein 3'">
    <location>
        <begin position="1335"/>
        <end position="1826"/>
    </location>
</feature>
<feature type="chain" id="PRO_0000229930" description="Non-structural protein 3">
    <location>
        <begin position="1335"/>
        <end position="1819"/>
    </location>
</feature>
<feature type="chain" id="PRO_0000229932" description="RNA-directed RNA polymerase nsP4">
    <location>
        <begin position="1827"/>
        <end position="2437"/>
    </location>
</feature>
<feature type="domain" description="Alphavirus-like MT" evidence="11">
    <location>
        <begin position="28"/>
        <end position="259"/>
    </location>
</feature>
<feature type="domain" description="(+)RNA virus helicase ATP-binding" evidence="10">
    <location>
        <begin position="691"/>
        <end position="843"/>
    </location>
</feature>
<feature type="domain" description="(+)RNA virus helicase C-terminal" evidence="10">
    <location>
        <begin position="844"/>
        <end position="992"/>
    </location>
</feature>
<feature type="domain" description="Peptidase C9" evidence="9">
    <location>
        <begin position="1005"/>
        <end position="1327"/>
    </location>
</feature>
<feature type="domain" description="Macro" evidence="7">
    <location>
        <begin position="1335"/>
        <end position="1493"/>
    </location>
</feature>
<feature type="domain" description="RdRp catalytic" evidence="8">
    <location>
        <begin position="2191"/>
        <end position="2306"/>
    </location>
</feature>
<feature type="region of interest" description="NsP1 membrane-binding" evidence="3">
    <location>
        <begin position="244"/>
        <end position="263"/>
    </location>
</feature>
<feature type="region of interest" description="Nucleolus localization signal" evidence="3">
    <location>
        <begin position="1006"/>
        <end position="1025"/>
    </location>
</feature>
<feature type="region of interest" description="Disordered" evidence="12">
    <location>
        <begin position="1675"/>
        <end position="1729"/>
    </location>
</feature>
<feature type="short sequence motif" description="Nuclear export signal" evidence="4">
    <location>
        <begin position="1059"/>
        <end position="1068"/>
    </location>
</feature>
<feature type="short sequence motif" description="Nuclear localization signal" evidence="3">
    <location>
        <begin position="1182"/>
        <end position="1186"/>
    </location>
</feature>
<feature type="short sequence motif" description="FGDF; binding to host G3BP1" evidence="3">
    <location>
        <begin position="1792"/>
        <end position="1795"/>
    </location>
</feature>
<feature type="short sequence motif" description="FGDF; binding to host G3BP1" evidence="3">
    <location>
        <begin position="1804"/>
        <end position="1807"/>
    </location>
</feature>
<feature type="compositionally biased region" description="Low complexity" evidence="12">
    <location>
        <begin position="1675"/>
        <end position="1684"/>
    </location>
</feature>
<feature type="active site" description="For cysteine protease nsP2 activity" evidence="9">
    <location>
        <position position="1014"/>
    </location>
</feature>
<feature type="active site" description="For cysteine protease nsP2 activity" evidence="9">
    <location>
        <position position="1084"/>
    </location>
</feature>
<feature type="binding site" evidence="10">
    <location>
        <begin position="722"/>
        <end position="729"/>
    </location>
    <ligand>
        <name>a ribonucleoside 5'-triphosphate</name>
        <dbReference type="ChEBI" id="CHEBI:61557"/>
    </ligand>
</feature>
<feature type="binding site" evidence="5">
    <location>
        <position position="1344"/>
    </location>
    <ligand>
        <name>ADP-D-ribose</name>
        <dbReference type="ChEBI" id="CHEBI:57967"/>
    </ligand>
</feature>
<feature type="binding site" evidence="6">
    <location>
        <position position="1358"/>
    </location>
    <ligand>
        <name>ADP-D-ribose</name>
        <dbReference type="ChEBI" id="CHEBI:57967"/>
    </ligand>
</feature>
<feature type="binding site" evidence="6">
    <location>
        <position position="1366"/>
    </location>
    <ligand>
        <name>ADP-D-ribose</name>
        <dbReference type="ChEBI" id="CHEBI:57967"/>
    </ligand>
</feature>
<feature type="binding site" evidence="5">
    <location>
        <position position="1446"/>
    </location>
    <ligand>
        <name>ADP-D-ribose</name>
        <dbReference type="ChEBI" id="CHEBI:57967"/>
    </ligand>
</feature>
<feature type="binding site" evidence="5">
    <location>
        <position position="1447"/>
    </location>
    <ligand>
        <name>ADP-D-ribose</name>
        <dbReference type="ChEBI" id="CHEBI:57967"/>
    </ligand>
</feature>
<feature type="binding site" evidence="5">
    <location>
        <position position="1448"/>
    </location>
    <ligand>
        <name>ADP-D-ribose</name>
        <dbReference type="ChEBI" id="CHEBI:57967"/>
    </ligand>
</feature>
<feature type="binding site" evidence="2">
    <location>
        <position position="1596"/>
    </location>
    <ligand>
        <name>Zn(2+)</name>
        <dbReference type="ChEBI" id="CHEBI:29105"/>
    </ligand>
</feature>
<feature type="binding site" evidence="2">
    <location>
        <position position="1598"/>
    </location>
    <ligand>
        <name>Zn(2+)</name>
        <dbReference type="ChEBI" id="CHEBI:29105"/>
    </ligand>
</feature>
<feature type="binding site" evidence="2">
    <location>
        <position position="1621"/>
    </location>
    <ligand>
        <name>Zn(2+)</name>
        <dbReference type="ChEBI" id="CHEBI:29105"/>
    </ligand>
</feature>
<feature type="binding site" evidence="2">
    <location>
        <position position="1639"/>
    </location>
    <ligand>
        <name>Zn(2+)</name>
        <dbReference type="ChEBI" id="CHEBI:29105"/>
    </ligand>
</feature>
<feature type="site" description="Involved in the phosphoramide link with 7-methyl-GMP" evidence="4">
    <location>
        <position position="37"/>
    </location>
</feature>
<feature type="site" description="Cleavage; by protease nsP2" evidence="2">
    <location>
        <begin position="536"/>
        <end position="537"/>
    </location>
</feature>
<feature type="site" description="Cleavage; by protease nsP2" evidence="2">
    <location>
        <begin position="1334"/>
        <end position="1335"/>
    </location>
</feature>
<feature type="site" description="Cleavage; by protease nsP2" evidence="6">
    <location>
        <begin position="1826"/>
        <end position="1827"/>
    </location>
</feature>
<feature type="lipid moiety-binding region" description="S-palmitoyl cysteine; by host" evidence="6">
    <location>
        <position position="417"/>
    </location>
</feature>
<feature type="lipid moiety-binding region" description="S-palmitoyl cysteine; by host" evidence="6">
    <location>
        <position position="419"/>
    </location>
</feature>
<feature type="mutagenesis site" description="Loss of NTPase activity. Reduced IFN induction in response to SeV infection." evidence="13">
    <original>K</original>
    <variation>N</variation>
    <location>
        <position position="733"/>
    </location>
</feature>
<feature type="mutagenesis site" description="Loss of protease activity. Reduced IFN induction in response to SeV infection." evidence="13">
    <original>C</original>
    <variation>A</variation>
    <location>
        <position position="1014"/>
    </location>
</feature>
<feature type="mutagenesis site" description="Unable to translocate into the nucleus. Almost complete loss of blocking the host IFN induction." evidence="13">
    <original>RK</original>
    <variation>AA</variation>
    <location>
        <begin position="1184"/>
        <end position="1185"/>
    </location>
</feature>
<feature type="mutagenesis site" description="Fourfold less effective in blocking host IFN induction." evidence="13">
    <original>P</original>
    <variation>S</variation>
    <location>
        <position position="1253"/>
    </location>
</feature>
<feature type="strand" evidence="17">
    <location>
        <begin position="1337"/>
        <end position="1344"/>
    </location>
</feature>
<feature type="strand" evidence="17">
    <location>
        <begin position="1350"/>
        <end position="1357"/>
    </location>
</feature>
<feature type="helix" evidence="17">
    <location>
        <begin position="1369"/>
        <end position="1374"/>
    </location>
</feature>
<feature type="helix" evidence="17">
    <location>
        <begin position="1376"/>
        <end position="1379"/>
    </location>
</feature>
<feature type="strand" evidence="17">
    <location>
        <begin position="1389"/>
        <end position="1403"/>
    </location>
</feature>
<feature type="helix" evidence="17">
    <location>
        <begin position="1407"/>
        <end position="1409"/>
    </location>
</feature>
<feature type="helix" evidence="17">
    <location>
        <begin position="1412"/>
        <end position="1433"/>
    </location>
</feature>
<feature type="strand" evidence="17">
    <location>
        <begin position="1436"/>
        <end position="1441"/>
    </location>
</feature>
<feature type="helix" evidence="17">
    <location>
        <begin position="1455"/>
        <end position="1466"/>
    </location>
</feature>
<feature type="strand" evidence="17">
    <location>
        <begin position="1471"/>
        <end position="1477"/>
    </location>
</feature>
<feature type="helix" evidence="17">
    <location>
        <begin position="1481"/>
        <end position="1492"/>
    </location>
</feature>
<dbReference type="EC" id="2.1.1.-" evidence="4"/>
<dbReference type="EC" id="2.7.7.-" evidence="2"/>
<dbReference type="EC" id="3.4.22.-" evidence="13"/>
<dbReference type="EC" id="3.6.1.15" evidence="13"/>
<dbReference type="EC" id="3.6.1.74" evidence="3"/>
<dbReference type="EC" id="3.6.4.13" evidence="6"/>
<dbReference type="EC" id="3.1.3.84" evidence="14 6"/>
<dbReference type="EC" id="2.7.7.19" evidence="2"/>
<dbReference type="EC" id="2.7.7.48" evidence="8"/>
<dbReference type="EMBL" id="AF237947">
    <property type="protein sequence ID" value="AAL79763.1"/>
    <property type="molecule type" value="Genomic_RNA"/>
</dbReference>
<dbReference type="EMBL" id="AF237947">
    <property type="protein sequence ID" value="AAL79765.1"/>
    <property type="status" value="ALT_SEQ"/>
    <property type="molecule type" value="Genomic_RNA"/>
</dbReference>
<dbReference type="RefSeq" id="NP_579968.1">
    <property type="nucleotide sequence ID" value="NC_003417.1"/>
</dbReference>
<dbReference type="RefSeq" id="NP_579969.1">
    <property type="nucleotide sequence ID" value="NC_003417.1"/>
</dbReference>
<dbReference type="PDB" id="5IQ5">
    <property type="method" value="NMR"/>
    <property type="chains" value="A=1335-1493"/>
</dbReference>
<dbReference type="PDBsum" id="5IQ5"/>
<dbReference type="SMR" id="Q8QZ73"/>
<dbReference type="IntAct" id="Q8QZ73">
    <property type="interactions" value="5"/>
</dbReference>
<dbReference type="MEROPS" id="C09.001"/>
<dbReference type="GeneID" id="935140"/>
<dbReference type="GeneID" id="935142"/>
<dbReference type="KEGG" id="vg:935140"/>
<dbReference type="KEGG" id="vg:935142"/>
<dbReference type="Proteomes" id="UP000007774">
    <property type="component" value="Segment"/>
</dbReference>
<dbReference type="GO" id="GO:0044162">
    <property type="term" value="C:host cell cytoplasmic vesicle membrane"/>
    <property type="evidence" value="ECO:0007669"/>
    <property type="project" value="UniProtKB-SubCell"/>
</dbReference>
<dbReference type="GO" id="GO:0044176">
    <property type="term" value="C:host cell filopodium"/>
    <property type="evidence" value="ECO:0007669"/>
    <property type="project" value="UniProtKB-SubCell"/>
</dbReference>
<dbReference type="GO" id="GO:0042025">
    <property type="term" value="C:host cell nucleus"/>
    <property type="evidence" value="ECO:0007669"/>
    <property type="project" value="UniProtKB-SubCell"/>
</dbReference>
<dbReference type="GO" id="GO:0020002">
    <property type="term" value="C:host cell plasma membrane"/>
    <property type="evidence" value="ECO:0007669"/>
    <property type="project" value="UniProtKB-SubCell"/>
</dbReference>
<dbReference type="GO" id="GO:0016020">
    <property type="term" value="C:membrane"/>
    <property type="evidence" value="ECO:0007669"/>
    <property type="project" value="UniProtKB-KW"/>
</dbReference>
<dbReference type="GO" id="GO:0005524">
    <property type="term" value="F:ATP binding"/>
    <property type="evidence" value="ECO:0007669"/>
    <property type="project" value="UniProtKB-KW"/>
</dbReference>
<dbReference type="GO" id="GO:0016887">
    <property type="term" value="F:ATP hydrolysis activity"/>
    <property type="evidence" value="ECO:0007669"/>
    <property type="project" value="RHEA"/>
</dbReference>
<dbReference type="GO" id="GO:0008234">
    <property type="term" value="F:cysteine-type peptidase activity"/>
    <property type="evidence" value="ECO:0007669"/>
    <property type="project" value="UniProtKB-KW"/>
</dbReference>
<dbReference type="GO" id="GO:0005525">
    <property type="term" value="F:GTP binding"/>
    <property type="evidence" value="ECO:0007669"/>
    <property type="project" value="UniProtKB-KW"/>
</dbReference>
<dbReference type="GO" id="GO:0046872">
    <property type="term" value="F:metal ion binding"/>
    <property type="evidence" value="ECO:0007669"/>
    <property type="project" value="UniProtKB-KW"/>
</dbReference>
<dbReference type="GO" id="GO:0140818">
    <property type="term" value="F:mRNA 5'-triphosphate monophosphatase activity"/>
    <property type="evidence" value="ECO:0007669"/>
    <property type="project" value="RHEA"/>
</dbReference>
<dbReference type="GO" id="GO:0008174">
    <property type="term" value="F:mRNA methyltransferase activity"/>
    <property type="evidence" value="ECO:0007669"/>
    <property type="project" value="InterPro"/>
</dbReference>
<dbReference type="GO" id="GO:1990817">
    <property type="term" value="F:poly(A) RNA polymerase activity"/>
    <property type="evidence" value="ECO:0007669"/>
    <property type="project" value="UniProtKB-EC"/>
</dbReference>
<dbReference type="GO" id="GO:0004651">
    <property type="term" value="F:polynucleotide 5'-phosphatase activity"/>
    <property type="evidence" value="ECO:0007669"/>
    <property type="project" value="UniProtKB-EC"/>
</dbReference>
<dbReference type="GO" id="GO:0003723">
    <property type="term" value="F:RNA binding"/>
    <property type="evidence" value="ECO:0007669"/>
    <property type="project" value="UniProtKB-KW"/>
</dbReference>
<dbReference type="GO" id="GO:0003724">
    <property type="term" value="F:RNA helicase activity"/>
    <property type="evidence" value="ECO:0007669"/>
    <property type="project" value="UniProtKB-EC"/>
</dbReference>
<dbReference type="GO" id="GO:0003968">
    <property type="term" value="F:RNA-directed RNA polymerase activity"/>
    <property type="evidence" value="ECO:0007669"/>
    <property type="project" value="UniProtKB-KW"/>
</dbReference>
<dbReference type="GO" id="GO:0006370">
    <property type="term" value="P:7-methylguanosine mRNA capping"/>
    <property type="evidence" value="ECO:0007669"/>
    <property type="project" value="UniProtKB-KW"/>
</dbReference>
<dbReference type="GO" id="GO:0006351">
    <property type="term" value="P:DNA-templated transcription"/>
    <property type="evidence" value="ECO:0007669"/>
    <property type="project" value="InterPro"/>
</dbReference>
<dbReference type="GO" id="GO:0032259">
    <property type="term" value="P:methylation"/>
    <property type="evidence" value="ECO:0007669"/>
    <property type="project" value="UniProtKB-KW"/>
</dbReference>
<dbReference type="GO" id="GO:0016556">
    <property type="term" value="P:mRNA modification"/>
    <property type="evidence" value="ECO:0007669"/>
    <property type="project" value="InterPro"/>
</dbReference>
<dbReference type="GO" id="GO:0006508">
    <property type="term" value="P:proteolysis"/>
    <property type="evidence" value="ECO:0007669"/>
    <property type="project" value="UniProtKB-KW"/>
</dbReference>
<dbReference type="GO" id="GO:0039657">
    <property type="term" value="P:symbiont-mediated suppression of host gene expression"/>
    <property type="evidence" value="ECO:0007669"/>
    <property type="project" value="UniProtKB-KW"/>
</dbReference>
<dbReference type="GO" id="GO:0039523">
    <property type="term" value="P:symbiont-mediated suppression of host mRNA transcription via inhibition of RNA polymerase II activity"/>
    <property type="evidence" value="ECO:0007669"/>
    <property type="project" value="UniProtKB-KW"/>
</dbReference>
<dbReference type="GO" id="GO:0039694">
    <property type="term" value="P:viral RNA genome replication"/>
    <property type="evidence" value="ECO:0007669"/>
    <property type="project" value="InterPro"/>
</dbReference>
<dbReference type="CDD" id="cd21557">
    <property type="entry name" value="Macro_X_Nsp3-like"/>
    <property type="match status" value="1"/>
</dbReference>
<dbReference type="CDD" id="cd23250">
    <property type="entry name" value="Togaviridae_RdRp"/>
    <property type="match status" value="1"/>
</dbReference>
<dbReference type="FunFam" id="3.40.220.10:FF:000015">
    <property type="entry name" value="Polyprotein P1234"/>
    <property type="match status" value="1"/>
</dbReference>
<dbReference type="FunFam" id="3.40.50.300:FF:001415">
    <property type="entry name" value="Polyprotein P1234"/>
    <property type="match status" value="1"/>
</dbReference>
<dbReference type="Gene3D" id="3.90.70.110">
    <property type="entry name" value="Alphavirus nsP2 protease domain"/>
    <property type="match status" value="1"/>
</dbReference>
<dbReference type="Gene3D" id="3.40.220.10">
    <property type="entry name" value="Leucine Aminopeptidase, subunit E, domain 1"/>
    <property type="match status" value="1"/>
</dbReference>
<dbReference type="Gene3D" id="3.40.50.300">
    <property type="entry name" value="P-loop containing nucleotide triphosphate hydrolases"/>
    <property type="match status" value="2"/>
</dbReference>
<dbReference type="Gene3D" id="3.40.50.150">
    <property type="entry name" value="Vaccinia Virus protein VP39"/>
    <property type="match status" value="1"/>
</dbReference>
<dbReference type="InterPro" id="IPR027351">
    <property type="entry name" value="(+)RNA_virus_helicase_core_dom"/>
</dbReference>
<dbReference type="InterPro" id="IPR002588">
    <property type="entry name" value="Alphavirus-like_MT_dom"/>
</dbReference>
<dbReference type="InterPro" id="IPR002620">
    <property type="entry name" value="Alphavirus_nsp2pro"/>
</dbReference>
<dbReference type="InterPro" id="IPR044936">
    <property type="entry name" value="Alphavirus_nsp2pro_sf"/>
</dbReference>
<dbReference type="InterPro" id="IPR043502">
    <property type="entry name" value="DNA/RNA_pol_sf"/>
</dbReference>
<dbReference type="InterPro" id="IPR002589">
    <property type="entry name" value="Macro_dom"/>
</dbReference>
<dbReference type="InterPro" id="IPR043472">
    <property type="entry name" value="Macro_dom-like"/>
</dbReference>
<dbReference type="InterPro" id="IPR044371">
    <property type="entry name" value="Macro_X_NSP3-like"/>
</dbReference>
<dbReference type="InterPro" id="IPR048891">
    <property type="entry name" value="nsP3_ZBD"/>
</dbReference>
<dbReference type="InterPro" id="IPR027417">
    <property type="entry name" value="P-loop_NTPase"/>
</dbReference>
<dbReference type="InterPro" id="IPR001788">
    <property type="entry name" value="RNA-dep_RNA_pol_alsuvir"/>
</dbReference>
<dbReference type="InterPro" id="IPR007094">
    <property type="entry name" value="RNA-dir_pol_PSvirus"/>
</dbReference>
<dbReference type="InterPro" id="IPR029063">
    <property type="entry name" value="SAM-dependent_MTases_sf"/>
</dbReference>
<dbReference type="InterPro" id="IPR047311">
    <property type="entry name" value="Togaviridae_RdRp"/>
</dbReference>
<dbReference type="InterPro" id="IPR049329">
    <property type="entry name" value="ToMV_Hel_N"/>
</dbReference>
<dbReference type="Pfam" id="PF01661">
    <property type="entry name" value="Macro"/>
    <property type="match status" value="1"/>
</dbReference>
<dbReference type="Pfam" id="PF20852">
    <property type="entry name" value="nsP3_ZBD"/>
    <property type="match status" value="1"/>
</dbReference>
<dbReference type="Pfam" id="PF01707">
    <property type="entry name" value="Peptidase_C9"/>
    <property type="match status" value="1"/>
</dbReference>
<dbReference type="Pfam" id="PF00978">
    <property type="entry name" value="RdRP_2"/>
    <property type="match status" value="1"/>
</dbReference>
<dbReference type="Pfam" id="PF20896">
    <property type="entry name" value="ToMV_Hel_N"/>
    <property type="match status" value="1"/>
</dbReference>
<dbReference type="Pfam" id="PF01443">
    <property type="entry name" value="Viral_helicase1"/>
    <property type="match status" value="1"/>
</dbReference>
<dbReference type="Pfam" id="PF01660">
    <property type="entry name" value="Vmethyltransf"/>
    <property type="match status" value="1"/>
</dbReference>
<dbReference type="SMART" id="SM00506">
    <property type="entry name" value="A1pp"/>
    <property type="match status" value="1"/>
</dbReference>
<dbReference type="SUPFAM" id="SSF56672">
    <property type="entry name" value="DNA/RNA polymerases"/>
    <property type="match status" value="1"/>
</dbReference>
<dbReference type="SUPFAM" id="SSF52949">
    <property type="entry name" value="Macro domain-like"/>
    <property type="match status" value="1"/>
</dbReference>
<dbReference type="SUPFAM" id="SSF52540">
    <property type="entry name" value="P-loop containing nucleoside triphosphate hydrolases"/>
    <property type="match status" value="1"/>
</dbReference>
<dbReference type="SUPFAM" id="SSF53335">
    <property type="entry name" value="S-adenosyl-L-methionine-dependent methyltransferases"/>
    <property type="match status" value="1"/>
</dbReference>
<dbReference type="PROSITE" id="PS51743">
    <property type="entry name" value="ALPHAVIRUS_MT"/>
    <property type="match status" value="1"/>
</dbReference>
<dbReference type="PROSITE" id="PS51154">
    <property type="entry name" value="MACRO"/>
    <property type="match status" value="1"/>
</dbReference>
<dbReference type="PROSITE" id="PS51520">
    <property type="entry name" value="NSP2PRO"/>
    <property type="match status" value="1"/>
</dbReference>
<dbReference type="PROSITE" id="PS51657">
    <property type="entry name" value="PSRV_HELICASE"/>
    <property type="match status" value="1"/>
</dbReference>
<dbReference type="PROSITE" id="PS50507">
    <property type="entry name" value="RDRP_SSRNA_POS"/>
    <property type="match status" value="1"/>
</dbReference>